<accession>Q57168</accession>
<accession>O05053</accession>
<evidence type="ECO:0000250" key="1">
    <source>
        <dbReference type="UniProtKB" id="P08957"/>
    </source>
</evidence>
<evidence type="ECO:0000250" key="2">
    <source>
        <dbReference type="UniProtKB" id="Q89Z59"/>
    </source>
</evidence>
<evidence type="ECO:0000269" key="3">
    <source>
    </source>
</evidence>
<evidence type="ECO:0000303" key="4">
    <source>
    </source>
</evidence>
<evidence type="ECO:0000303" key="5">
    <source>
    </source>
</evidence>
<evidence type="ECO:0000305" key="6"/>
<evidence type="ECO:0000305" key="7">
    <source>
    </source>
</evidence>
<evidence type="ECO:0000305" key="8">
    <source>
    </source>
</evidence>
<proteinExistence type="evidence at protein level"/>
<reference key="1">
    <citation type="journal article" date="1995" name="Science">
        <title>Whole-genome random sequencing and assembly of Haemophilus influenzae Rd.</title>
        <authorList>
            <person name="Fleischmann R.D."/>
            <person name="Adams M.D."/>
            <person name="White O."/>
            <person name="Clayton R.A."/>
            <person name="Kirkness E.F."/>
            <person name="Kerlavage A.R."/>
            <person name="Bult C.J."/>
            <person name="Tomb J.-F."/>
            <person name="Dougherty B.A."/>
            <person name="Merrick J.M."/>
            <person name="McKenney K."/>
            <person name="Sutton G.G."/>
            <person name="FitzHugh W."/>
            <person name="Fields C.A."/>
            <person name="Gocayne J.D."/>
            <person name="Scott J.D."/>
            <person name="Shirley R."/>
            <person name="Liu L.-I."/>
            <person name="Glodek A."/>
            <person name="Kelley J.M."/>
            <person name="Weidman J.F."/>
            <person name="Phillips C.A."/>
            <person name="Spriggs T."/>
            <person name="Hedblom E."/>
            <person name="Cotton M.D."/>
            <person name="Utterback T.R."/>
            <person name="Hanna M.C."/>
            <person name="Nguyen D.T."/>
            <person name="Saudek D.M."/>
            <person name="Brandon R.C."/>
            <person name="Fine L.D."/>
            <person name="Fritchman J.L."/>
            <person name="Fuhrmann J.L."/>
            <person name="Geoghagen N.S.M."/>
            <person name="Gnehm C.L."/>
            <person name="McDonald L.A."/>
            <person name="Small K.V."/>
            <person name="Fraser C.M."/>
            <person name="Smith H.O."/>
            <person name="Venter J.C."/>
        </authorList>
    </citation>
    <scope>NUCLEOTIDE SEQUENCE [LARGE SCALE GENOMIC DNA]</scope>
    <source>
        <strain>ATCC 51907 / DSM 11121 / KW20 / Rd</strain>
    </source>
</reference>
<reference key="2">
    <citation type="journal article" date="1973" name="J. Mol. Biol.">
        <title>DNA methylases of Hemophilus influenzae Rd. I. Purification and properties.</title>
        <authorList>
            <person name="Roy P.H."/>
            <person name="Smith H.O."/>
        </authorList>
    </citation>
    <scope>FUNCTION AS A METHYLASE</scope>
    <scope>CATALYTIC ACTIVITY</scope>
    <scope>BIOPHYSICOCHEMICAL PROPERTIES</scope>
    <source>
        <strain>ATCC 51907 / DSM 11121 / KW20 / Rd</strain>
    </source>
</reference>
<reference key="3">
    <citation type="journal article" date="1973" name="J. Mol. Biol.">
        <title>DNA methylases of Hemophilus influenzae Rd. II. Partial recognition site base sequences.</title>
        <authorList>
            <person name="Roy P.H."/>
            <person name="Smith H.O."/>
        </authorList>
    </citation>
    <scope>PARTIAL RECOGNITION SEQUENCE</scope>
    <source>
        <strain>ATCC 51907 / DSM 11121 / KW20 / Rd</strain>
    </source>
</reference>
<reference key="4">
    <citation type="journal article" date="2003" name="Nucleic Acids Res.">
        <title>A nomenclature for restriction enzymes, DNA methyltransferases, homing endonucleases and their genes.</title>
        <authorList>
            <person name="Roberts R.J."/>
            <person name="Belfort M."/>
            <person name="Bestor T."/>
            <person name="Bhagwat A.S."/>
            <person name="Bickle T.A."/>
            <person name="Bitinaite J."/>
            <person name="Blumenthal R.M."/>
            <person name="Degtyarev S.K."/>
            <person name="Dryden D.T."/>
            <person name="Dybvig K."/>
            <person name="Firman K."/>
            <person name="Gromova E.S."/>
            <person name="Gumport R.I."/>
            <person name="Halford S.E."/>
            <person name="Hattman S."/>
            <person name="Heitman J."/>
            <person name="Hornby D.P."/>
            <person name="Janulaitis A."/>
            <person name="Jeltsch A."/>
            <person name="Josephsen J."/>
            <person name="Kiss A."/>
            <person name="Klaenhammer T.R."/>
            <person name="Kobayashi I."/>
            <person name="Kong H."/>
            <person name="Krueger D.H."/>
            <person name="Lacks S."/>
            <person name="Marinus M.G."/>
            <person name="Miyahara M."/>
            <person name="Morgan R.D."/>
            <person name="Murray N.E."/>
            <person name="Nagaraja V."/>
            <person name="Piekarowicz A."/>
            <person name="Pingoud A."/>
            <person name="Raleigh E."/>
            <person name="Rao D.N."/>
            <person name="Reich N."/>
            <person name="Repin V.E."/>
            <person name="Selker E.U."/>
            <person name="Shaw P.C."/>
            <person name="Stein D.C."/>
            <person name="Stoddard B.L."/>
            <person name="Szybalski W."/>
            <person name="Trautner T.A."/>
            <person name="Van Etten J.L."/>
            <person name="Vitor J.M."/>
            <person name="Wilson G.G."/>
            <person name="Xu S.Y."/>
        </authorList>
    </citation>
    <scope>NOMENCLATURE</scope>
    <scope>SUBTYPE</scope>
</reference>
<protein>
    <recommendedName>
        <fullName>Type I restriction enzyme HindI methylase subunit</fullName>
        <shortName>M protein</shortName>
        <ecNumber evidence="3">2.1.1.72</ecNumber>
    </recommendedName>
    <alternativeName>
        <fullName evidence="4">Type I methyltransferase M.HindI</fullName>
        <shortName evidence="4">M.HindI</shortName>
    </alternativeName>
    <alternativeName>
        <fullName>Type I restriction enzyme HindVIIP methylase subunit</fullName>
    </alternativeName>
</protein>
<dbReference type="EC" id="2.1.1.72" evidence="3"/>
<dbReference type="EMBL" id="L42023">
    <property type="protein sequence ID" value="AAC22936.1"/>
    <property type="molecule type" value="Genomic_DNA"/>
</dbReference>
<dbReference type="PIR" id="G64114">
    <property type="entry name" value="G64114"/>
</dbReference>
<dbReference type="RefSeq" id="NP_439439.2">
    <property type="nucleotide sequence ID" value="NC_000907.1"/>
</dbReference>
<dbReference type="SMR" id="Q57168"/>
<dbReference type="STRING" id="71421.HI_1287"/>
<dbReference type="REBASE" id="203814">
    <property type="entry name" value="M.Lbr1106ORF30P"/>
</dbReference>
<dbReference type="REBASE" id="231750">
    <property type="entry name" value="M.Sen4839ORF3820P"/>
</dbReference>
<dbReference type="REBASE" id="3426">
    <property type="entry name" value="M.HindI"/>
</dbReference>
<dbReference type="EnsemblBacteria" id="AAC22936">
    <property type="protein sequence ID" value="AAC22936"/>
    <property type="gene ID" value="HI_1287"/>
</dbReference>
<dbReference type="KEGG" id="hin:HI_1287"/>
<dbReference type="PATRIC" id="fig|71421.8.peg.1339"/>
<dbReference type="eggNOG" id="COG0286">
    <property type="taxonomic scope" value="Bacteria"/>
</dbReference>
<dbReference type="HOGENOM" id="CLU_013049_4_1_6"/>
<dbReference type="OrthoDB" id="9784823at2"/>
<dbReference type="PhylomeDB" id="Q57168"/>
<dbReference type="PRO" id="PR:Q57168"/>
<dbReference type="Proteomes" id="UP000000579">
    <property type="component" value="Chromosome"/>
</dbReference>
<dbReference type="GO" id="GO:0003677">
    <property type="term" value="F:DNA binding"/>
    <property type="evidence" value="ECO:0007669"/>
    <property type="project" value="UniProtKB-KW"/>
</dbReference>
<dbReference type="GO" id="GO:0008170">
    <property type="term" value="F:N-methyltransferase activity"/>
    <property type="evidence" value="ECO:0007669"/>
    <property type="project" value="InterPro"/>
</dbReference>
<dbReference type="GO" id="GO:0009007">
    <property type="term" value="F:site-specific DNA-methyltransferase (adenine-specific) activity"/>
    <property type="evidence" value="ECO:0007669"/>
    <property type="project" value="UniProtKB-EC"/>
</dbReference>
<dbReference type="GO" id="GO:0009307">
    <property type="term" value="P:DNA restriction-modification system"/>
    <property type="evidence" value="ECO:0007669"/>
    <property type="project" value="UniProtKB-KW"/>
</dbReference>
<dbReference type="GO" id="GO:0032259">
    <property type="term" value="P:methylation"/>
    <property type="evidence" value="ECO:0007669"/>
    <property type="project" value="UniProtKB-KW"/>
</dbReference>
<dbReference type="Gene3D" id="1.20.1260.30">
    <property type="match status" value="1"/>
</dbReference>
<dbReference type="Gene3D" id="3.40.50.150">
    <property type="entry name" value="Vaccinia Virus protein VP39"/>
    <property type="match status" value="1"/>
</dbReference>
<dbReference type="InterPro" id="IPR003356">
    <property type="entry name" value="DNA_methylase_A-5"/>
</dbReference>
<dbReference type="InterPro" id="IPR029063">
    <property type="entry name" value="SAM-dependent_MTases_sf"/>
</dbReference>
<dbReference type="InterPro" id="IPR038333">
    <property type="entry name" value="T1MK-like_N_sf"/>
</dbReference>
<dbReference type="InterPro" id="IPR052916">
    <property type="entry name" value="Type-I_RE_MTase_Subunit"/>
</dbReference>
<dbReference type="PANTHER" id="PTHR42998:SF1">
    <property type="entry name" value="TYPE I RESTRICTION ENZYME HINDI METHYLASE SUBUNIT"/>
    <property type="match status" value="1"/>
</dbReference>
<dbReference type="PANTHER" id="PTHR42998">
    <property type="entry name" value="TYPE I RESTRICTION ENZYME HINDVIIP M PROTEIN-RELATED"/>
    <property type="match status" value="1"/>
</dbReference>
<dbReference type="Pfam" id="PF02384">
    <property type="entry name" value="N6_Mtase"/>
    <property type="match status" value="1"/>
</dbReference>
<dbReference type="PRINTS" id="PR00507">
    <property type="entry name" value="N12N6MTFRASE"/>
</dbReference>
<dbReference type="SUPFAM" id="SSF53335">
    <property type="entry name" value="S-adenosyl-L-methionine-dependent methyltransferases"/>
    <property type="match status" value="1"/>
</dbReference>
<keyword id="KW-0238">DNA-binding</keyword>
<keyword id="KW-0489">Methyltransferase</keyword>
<keyword id="KW-1185">Reference proteome</keyword>
<keyword id="KW-0680">Restriction system</keyword>
<keyword id="KW-0949">S-adenosyl-L-methionine</keyword>
<keyword id="KW-0808">Transferase</keyword>
<organism>
    <name type="scientific">Haemophilus influenzae (strain ATCC 51907 / DSM 11121 / KW20 / Rd)</name>
    <dbReference type="NCBI Taxonomy" id="71421"/>
    <lineage>
        <taxon>Bacteria</taxon>
        <taxon>Pseudomonadati</taxon>
        <taxon>Pseudomonadota</taxon>
        <taxon>Gammaproteobacteria</taxon>
        <taxon>Pasteurellales</taxon>
        <taxon>Pasteurellaceae</taxon>
        <taxon>Haemophilus</taxon>
    </lineage>
</organism>
<comment type="function">
    <text evidence="1 3 4 7 8">The subtype gamma methyltransferase (M) subunit of a type I restriction enzyme. The M and S subunits together form a methyltransferase (MTase) that methylates adenosines in the sequence 5'-RAACN(5)TAG-3'. Methylation protects against cleavage by HindI (Probable) (PubMed:4591672). In the presence of the R subunit the complex can also act as an endonuclease, binding to the same target sequence but cutting the DNA some distance from this site. Whether the DNA is cut or modified depends on the methylation state of the target sequence. When the target site is unmodified, the DNA is cut. When the target site is hemimethylated, the complex acts as a maintenance MTase modifying the DNA so that both strands become methylated (Probable) (PubMed:12654995). After locating a non-methylated recognition site, the enzyme complex serves as a molecular motor that translocates DNA in an ATP-dependent manner until a collision occurs that triggers cleavage (By similarity).</text>
</comment>
<comment type="catalytic activity">
    <reaction evidence="3">
        <text>a 2'-deoxyadenosine in DNA + S-adenosyl-L-methionine = an N(6)-methyl-2'-deoxyadenosine in DNA + S-adenosyl-L-homocysteine + H(+)</text>
        <dbReference type="Rhea" id="RHEA:15197"/>
        <dbReference type="Rhea" id="RHEA-COMP:12418"/>
        <dbReference type="Rhea" id="RHEA-COMP:12419"/>
        <dbReference type="ChEBI" id="CHEBI:15378"/>
        <dbReference type="ChEBI" id="CHEBI:57856"/>
        <dbReference type="ChEBI" id="CHEBI:59789"/>
        <dbReference type="ChEBI" id="CHEBI:90615"/>
        <dbReference type="ChEBI" id="CHEBI:90616"/>
        <dbReference type="EC" id="2.1.1.72"/>
    </reaction>
</comment>
<comment type="biophysicochemical properties">
    <kinetics>
        <KM evidence="3">16 nM for S-adenosyl-L-methionine</KM>
    </kinetics>
</comment>
<comment type="subunit">
    <text evidence="1">The type I restriction/modification system is composed of three polypeptides R, M and S; the restriction enzyme has stoichiometry R(2)M(2)S(1) while the methyltransferase is M(2)S(1).</text>
</comment>
<comment type="miscellaneous">
    <text evidence="1">Type I restriction and modification enzymes are complex, multifunctional systems which require ATP, S-adenosyl methionine and Mg(2+) as cofactors and, in addition to their endonucleolytic and methylase activities, are potent DNA-dependent ATPases.</text>
</comment>
<comment type="similarity">
    <text evidence="6">Belongs to the N(4)/N(6)-methyltransferase family.</text>
</comment>
<name>T1MH_HAEIN</name>
<sequence length="443" mass="49732">MPASARWQALQEVSILNTGAELPWGGKFSGVAKLIDDAFDAIEKDNEKLKGVLQRISGYAVNEDTLRGLIILFSDTHFTRPTYNGEPVHLGAKDILGHVYEYFLSRFAQAEGKRSGQYFTPKSIVSLIVEMLEPYSGRVYDPAMGSGGFFVQTERFITAHQGNINNVSIYGQEFNPTTWKLAAMNMAIRGIDYDFGKYNADSFTQPQHIDKKMDFIMANPHFNDKEWWNESLADDPRWAYGTPPKGNANFAWLQHMIYHLSPNGKIALLLANGSMSSQTNNEGEIRKAIINADLVECMVALPGQLFTNTKIPACIWFLNRNKKRKGEVLFIDARQIGYMKDRVLRDFTADDIAKIADTLHAWQTSDGYEDQAAFCKSATLEEIKNNDFVLTPGRYVGTAEQEDDGVPFAEKMQNLTALLKEQFAKSAELEAEIKKNLGGLGYE</sequence>
<gene>
    <name evidence="5" type="primary">hsdM</name>
    <name type="ordered locus">HI_1287</name>
</gene>
<feature type="chain" id="PRO_0000088027" description="Type I restriction enzyme HindI methylase subunit">
    <location>
        <begin position="1"/>
        <end position="443"/>
    </location>
</feature>
<feature type="binding site" evidence="2">
    <location>
        <begin position="117"/>
        <end position="122"/>
    </location>
    <ligand>
        <name>S-adenosyl-L-methionine</name>
        <dbReference type="ChEBI" id="CHEBI:59789"/>
    </ligand>
</feature>
<feature type="binding site" evidence="2">
    <location>
        <begin position="146"/>
        <end position="148"/>
    </location>
    <ligand>
        <name>S-adenosyl-L-methionine</name>
        <dbReference type="ChEBI" id="CHEBI:59789"/>
    </ligand>
</feature>
<feature type="binding site" evidence="2">
    <location>
        <position position="173"/>
    </location>
    <ligand>
        <name>S-adenosyl-L-methionine</name>
        <dbReference type="ChEBI" id="CHEBI:59789"/>
    </ligand>
</feature>